<protein>
    <recommendedName>
        <fullName evidence="1">Cell division topological specificity factor</fullName>
    </recommendedName>
</protein>
<proteinExistence type="inferred from homology"/>
<evidence type="ECO:0000255" key="1">
    <source>
        <dbReference type="HAMAP-Rule" id="MF_00262"/>
    </source>
</evidence>
<name>MINE_BRUAB</name>
<keyword id="KW-0131">Cell cycle</keyword>
<keyword id="KW-0132">Cell division</keyword>
<organism>
    <name type="scientific">Brucella abortus biovar 1 (strain 9-941)</name>
    <dbReference type="NCBI Taxonomy" id="262698"/>
    <lineage>
        <taxon>Bacteria</taxon>
        <taxon>Pseudomonadati</taxon>
        <taxon>Pseudomonadota</taxon>
        <taxon>Alphaproteobacteria</taxon>
        <taxon>Hyphomicrobiales</taxon>
        <taxon>Brucellaceae</taxon>
        <taxon>Brucella/Ochrobactrum group</taxon>
        <taxon>Brucella</taxon>
    </lineage>
</organism>
<accession>Q577D5</accession>
<feature type="chain" id="PRO_0000298083" description="Cell division topological specificity factor">
    <location>
        <begin position="1"/>
        <end position="90"/>
    </location>
</feature>
<sequence length="90" mass="10089">MSIFRFFTRQQASAPQARERLQVLLAHERASYGGQSDLVAVLREEILAVIAKHIKVDREKVSVKMDRGDQVSTLEVDIELPLTAKKGRAA</sequence>
<reference key="1">
    <citation type="journal article" date="2005" name="J. Bacteriol.">
        <title>Completion of the genome sequence of Brucella abortus and comparison to the highly similar genomes of Brucella melitensis and Brucella suis.</title>
        <authorList>
            <person name="Halling S.M."/>
            <person name="Peterson-Burch B.D."/>
            <person name="Bricker B.J."/>
            <person name="Zuerner R.L."/>
            <person name="Qing Z."/>
            <person name="Li L.-L."/>
            <person name="Kapur V."/>
            <person name="Alt D.P."/>
            <person name="Olsen S.C."/>
        </authorList>
    </citation>
    <scope>NUCLEOTIDE SEQUENCE [LARGE SCALE GENOMIC DNA]</scope>
    <source>
        <strain>9-941</strain>
    </source>
</reference>
<dbReference type="EMBL" id="AE017224">
    <property type="protein sequence ID" value="AAX76249.1"/>
    <property type="molecule type" value="Genomic_DNA"/>
</dbReference>
<dbReference type="RefSeq" id="WP_002966267.1">
    <property type="nucleotide sequence ID" value="NC_006933.1"/>
</dbReference>
<dbReference type="SMR" id="Q577D5"/>
<dbReference type="EnsemblBacteria" id="AAX76249">
    <property type="protein sequence ID" value="AAX76249"/>
    <property type="gene ID" value="BruAb2_0858"/>
</dbReference>
<dbReference type="GeneID" id="97535514"/>
<dbReference type="KEGG" id="bmb:BruAb2_0858"/>
<dbReference type="HOGENOM" id="CLU_137929_2_0_5"/>
<dbReference type="Proteomes" id="UP000000540">
    <property type="component" value="Chromosome II"/>
</dbReference>
<dbReference type="GO" id="GO:0051301">
    <property type="term" value="P:cell division"/>
    <property type="evidence" value="ECO:0007669"/>
    <property type="project" value="UniProtKB-KW"/>
</dbReference>
<dbReference type="GO" id="GO:0032955">
    <property type="term" value="P:regulation of division septum assembly"/>
    <property type="evidence" value="ECO:0007669"/>
    <property type="project" value="InterPro"/>
</dbReference>
<dbReference type="Gene3D" id="3.30.1070.10">
    <property type="entry name" value="Cell division topological specificity factor MinE"/>
    <property type="match status" value="1"/>
</dbReference>
<dbReference type="HAMAP" id="MF_00262">
    <property type="entry name" value="MinE"/>
    <property type="match status" value="1"/>
</dbReference>
<dbReference type="InterPro" id="IPR005527">
    <property type="entry name" value="MinE"/>
</dbReference>
<dbReference type="InterPro" id="IPR036707">
    <property type="entry name" value="MinE_sf"/>
</dbReference>
<dbReference type="NCBIfam" id="TIGR01215">
    <property type="entry name" value="minE"/>
    <property type="match status" value="1"/>
</dbReference>
<dbReference type="NCBIfam" id="NF001422">
    <property type="entry name" value="PRK00296.1"/>
    <property type="match status" value="1"/>
</dbReference>
<dbReference type="Pfam" id="PF03776">
    <property type="entry name" value="MinE"/>
    <property type="match status" value="1"/>
</dbReference>
<dbReference type="SUPFAM" id="SSF55229">
    <property type="entry name" value="Cell division protein MinE topological specificity domain"/>
    <property type="match status" value="1"/>
</dbReference>
<gene>
    <name evidence="1" type="primary">minE</name>
    <name type="ordered locus">BruAb2_0858</name>
</gene>
<comment type="function">
    <text evidence="1">Prevents the cell division inhibition by proteins MinC and MinD at internal division sites while permitting inhibition at polar sites. This ensures cell division at the proper site by restricting the formation of a division septum at the midpoint of the long axis of the cell.</text>
</comment>
<comment type="similarity">
    <text evidence="1">Belongs to the MinE family.</text>
</comment>